<reference key="1">
    <citation type="submission" date="2002-12" db="EMBL/GenBank/DDBJ databases">
        <title>Complete genome sequence of Vibrio vulnificus CMCP6.</title>
        <authorList>
            <person name="Rhee J.H."/>
            <person name="Kim S.Y."/>
            <person name="Chung S.S."/>
            <person name="Kim J.J."/>
            <person name="Moon Y.H."/>
            <person name="Jeong H."/>
            <person name="Choy H.E."/>
        </authorList>
    </citation>
    <scope>NUCLEOTIDE SEQUENCE [LARGE SCALE GENOMIC DNA]</scope>
    <source>
        <strain>CMCP6</strain>
    </source>
</reference>
<protein>
    <recommendedName>
        <fullName evidence="1">UvrABC system protein A</fullName>
        <shortName evidence="1">UvrA protein</shortName>
    </recommendedName>
    <alternativeName>
        <fullName evidence="1">Excinuclease ABC subunit A</fullName>
    </alternativeName>
</protein>
<gene>
    <name evidence="1" type="primary">uvrA</name>
    <name type="ordered locus">VV1_1427</name>
</gene>
<name>UVRA_VIBVU</name>
<comment type="function">
    <text evidence="1">The UvrABC repair system catalyzes the recognition and processing of DNA lesions. UvrA is an ATPase and a DNA-binding protein. A damage recognition complex composed of 2 UvrA and 2 UvrB subunits scans DNA for abnormalities. When the presence of a lesion has been verified by UvrB, the UvrA molecules dissociate.</text>
</comment>
<comment type="subunit">
    <text evidence="1">Forms a heterotetramer with UvrB during the search for lesions.</text>
</comment>
<comment type="subcellular location">
    <subcellularLocation>
        <location evidence="1">Cytoplasm</location>
    </subcellularLocation>
</comment>
<comment type="similarity">
    <text evidence="1">Belongs to the ABC transporter superfamily. UvrA family.</text>
</comment>
<evidence type="ECO:0000255" key="1">
    <source>
        <dbReference type="HAMAP-Rule" id="MF_00205"/>
    </source>
</evidence>
<accession>Q8DCJ3</accession>
<proteinExistence type="inferred from homology"/>
<dbReference type="EMBL" id="AE016795">
    <property type="protein sequence ID" value="AAO09867.1"/>
    <property type="molecule type" value="Genomic_DNA"/>
</dbReference>
<dbReference type="RefSeq" id="WP_011079386.1">
    <property type="nucleotide sequence ID" value="NC_004459.3"/>
</dbReference>
<dbReference type="SMR" id="Q8DCJ3"/>
<dbReference type="KEGG" id="vvu:VV1_1427"/>
<dbReference type="HOGENOM" id="CLU_001370_0_2_6"/>
<dbReference type="Proteomes" id="UP000002275">
    <property type="component" value="Chromosome 1"/>
</dbReference>
<dbReference type="GO" id="GO:0005737">
    <property type="term" value="C:cytoplasm"/>
    <property type="evidence" value="ECO:0007669"/>
    <property type="project" value="UniProtKB-SubCell"/>
</dbReference>
<dbReference type="GO" id="GO:0009380">
    <property type="term" value="C:excinuclease repair complex"/>
    <property type="evidence" value="ECO:0007669"/>
    <property type="project" value="InterPro"/>
</dbReference>
<dbReference type="GO" id="GO:0005524">
    <property type="term" value="F:ATP binding"/>
    <property type="evidence" value="ECO:0007669"/>
    <property type="project" value="UniProtKB-UniRule"/>
</dbReference>
<dbReference type="GO" id="GO:0016887">
    <property type="term" value="F:ATP hydrolysis activity"/>
    <property type="evidence" value="ECO:0007669"/>
    <property type="project" value="InterPro"/>
</dbReference>
<dbReference type="GO" id="GO:0003677">
    <property type="term" value="F:DNA binding"/>
    <property type="evidence" value="ECO:0007669"/>
    <property type="project" value="UniProtKB-UniRule"/>
</dbReference>
<dbReference type="GO" id="GO:0009381">
    <property type="term" value="F:excinuclease ABC activity"/>
    <property type="evidence" value="ECO:0007669"/>
    <property type="project" value="UniProtKB-UniRule"/>
</dbReference>
<dbReference type="GO" id="GO:0008270">
    <property type="term" value="F:zinc ion binding"/>
    <property type="evidence" value="ECO:0007669"/>
    <property type="project" value="UniProtKB-UniRule"/>
</dbReference>
<dbReference type="GO" id="GO:0006289">
    <property type="term" value="P:nucleotide-excision repair"/>
    <property type="evidence" value="ECO:0007669"/>
    <property type="project" value="UniProtKB-UniRule"/>
</dbReference>
<dbReference type="GO" id="GO:0009432">
    <property type="term" value="P:SOS response"/>
    <property type="evidence" value="ECO:0007669"/>
    <property type="project" value="UniProtKB-UniRule"/>
</dbReference>
<dbReference type="CDD" id="cd03270">
    <property type="entry name" value="ABC_UvrA_I"/>
    <property type="match status" value="1"/>
</dbReference>
<dbReference type="CDD" id="cd03271">
    <property type="entry name" value="ABC_UvrA_II"/>
    <property type="match status" value="1"/>
</dbReference>
<dbReference type="FunFam" id="1.10.8.280:FF:000001">
    <property type="entry name" value="UvrABC system protein A"/>
    <property type="match status" value="1"/>
</dbReference>
<dbReference type="FunFam" id="1.20.1580.10:FF:000002">
    <property type="entry name" value="UvrABC system protein A"/>
    <property type="match status" value="1"/>
</dbReference>
<dbReference type="FunFam" id="1.20.1580.10:FF:000003">
    <property type="entry name" value="UvrABC system protein A"/>
    <property type="match status" value="1"/>
</dbReference>
<dbReference type="FunFam" id="3.30.190.20:FF:000003">
    <property type="entry name" value="UvrABC system protein A"/>
    <property type="match status" value="1"/>
</dbReference>
<dbReference type="Gene3D" id="1.10.8.280">
    <property type="entry name" value="ABC transporter ATPase domain-like"/>
    <property type="match status" value="1"/>
</dbReference>
<dbReference type="Gene3D" id="1.20.1580.10">
    <property type="entry name" value="ABC transporter ATPase like domain"/>
    <property type="match status" value="2"/>
</dbReference>
<dbReference type="Gene3D" id="3.30.1490.20">
    <property type="entry name" value="ATP-grasp fold, A domain"/>
    <property type="match status" value="1"/>
</dbReference>
<dbReference type="Gene3D" id="3.40.50.300">
    <property type="entry name" value="P-loop containing nucleotide triphosphate hydrolases"/>
    <property type="match status" value="2"/>
</dbReference>
<dbReference type="HAMAP" id="MF_00205">
    <property type="entry name" value="UvrA"/>
    <property type="match status" value="1"/>
</dbReference>
<dbReference type="InterPro" id="IPR003439">
    <property type="entry name" value="ABC_transporter-like_ATP-bd"/>
</dbReference>
<dbReference type="InterPro" id="IPR017871">
    <property type="entry name" value="ABC_transporter-like_CS"/>
</dbReference>
<dbReference type="InterPro" id="IPR013815">
    <property type="entry name" value="ATP_grasp_subdomain_1"/>
</dbReference>
<dbReference type="InterPro" id="IPR027417">
    <property type="entry name" value="P-loop_NTPase"/>
</dbReference>
<dbReference type="InterPro" id="IPR004602">
    <property type="entry name" value="UvrA"/>
</dbReference>
<dbReference type="InterPro" id="IPR041552">
    <property type="entry name" value="UvrA_DNA-bd"/>
</dbReference>
<dbReference type="InterPro" id="IPR041102">
    <property type="entry name" value="UvrA_inter"/>
</dbReference>
<dbReference type="NCBIfam" id="NF001503">
    <property type="entry name" value="PRK00349.1"/>
    <property type="match status" value="1"/>
</dbReference>
<dbReference type="NCBIfam" id="TIGR00630">
    <property type="entry name" value="uvra"/>
    <property type="match status" value="1"/>
</dbReference>
<dbReference type="PANTHER" id="PTHR43152">
    <property type="entry name" value="UVRABC SYSTEM PROTEIN A"/>
    <property type="match status" value="1"/>
</dbReference>
<dbReference type="PANTHER" id="PTHR43152:SF3">
    <property type="entry name" value="UVRABC SYSTEM PROTEIN A"/>
    <property type="match status" value="1"/>
</dbReference>
<dbReference type="Pfam" id="PF00005">
    <property type="entry name" value="ABC_tran"/>
    <property type="match status" value="1"/>
</dbReference>
<dbReference type="Pfam" id="PF17755">
    <property type="entry name" value="UvrA_DNA-bind"/>
    <property type="match status" value="1"/>
</dbReference>
<dbReference type="Pfam" id="PF17760">
    <property type="entry name" value="UvrA_inter"/>
    <property type="match status" value="1"/>
</dbReference>
<dbReference type="SUPFAM" id="SSF52540">
    <property type="entry name" value="P-loop containing nucleoside triphosphate hydrolases"/>
    <property type="match status" value="2"/>
</dbReference>
<dbReference type="PROSITE" id="PS00211">
    <property type="entry name" value="ABC_TRANSPORTER_1"/>
    <property type="match status" value="2"/>
</dbReference>
<dbReference type="PROSITE" id="PS50893">
    <property type="entry name" value="ABC_TRANSPORTER_2"/>
    <property type="match status" value="2"/>
</dbReference>
<keyword id="KW-0067">ATP-binding</keyword>
<keyword id="KW-0963">Cytoplasm</keyword>
<keyword id="KW-0227">DNA damage</keyword>
<keyword id="KW-0228">DNA excision</keyword>
<keyword id="KW-0234">DNA repair</keyword>
<keyword id="KW-0238">DNA-binding</keyword>
<keyword id="KW-0267">Excision nuclease</keyword>
<keyword id="KW-0479">Metal-binding</keyword>
<keyword id="KW-0547">Nucleotide-binding</keyword>
<keyword id="KW-0677">Repeat</keyword>
<keyword id="KW-0742">SOS response</keyword>
<keyword id="KW-0862">Zinc</keyword>
<keyword id="KW-0863">Zinc-finger</keyword>
<sequence length="940" mass="103960">MDKIEVRGARTHNLKNINLTIPRDKLIVITGLSGSGKSSLAFDTLYAEGQRRYVESLSAYARQFLSLMEKPDVDHIEGLSPAISIEQKSTSHNPRSTVGTITEVYDYLRLLYARVGEPRCPEHQVPLAAQTISQMVDKVLELPEGAKMMLLAPIVKERKGEHVKTLENLAAQGFIRARIDGETCDLTDPPTLELHKKHTIEVVVDRVKVRGDLQQRLAESFETALELSGGIAVIAPMEGDGEEIVFSANFACPHCGYSMQELEPRLFSFNNPAGACGTCDGLGVQQYFDPERVIQDANLSLAQGAIRGWDQKNYYYFQMLTSLAEHYDFDLHAPFNSLSKRIQEVILKGSGRTEIEFKYINDRGDIRLKRHPFEGILNTLERRYRDTESNSVREELVKYISTKPCTSCGGTRLRLEARNVFINDTTLPQIVELSIADALTFFATLKLEGQRAQIAEKVMKEINDRLQFLVNVGLNYLNLSRSAETLSGGEAQRIRLASQIGAGLVGVMYVLDEPSIGLHQRDNERLLKTLTHLRDLGNTVLVVEHDEDAIRCADHVIDIGPGAGVHGGQVVAEGTMAEILANPDSLTGQYLSGAKQIIVPTQRTPRDKNKTVELIGASGNNLKEVNLSVPVGLFSCITGVSGSGKSTLINDTFFKIAHTQLNGATTAQPAPYKSIKGLEHFDKVIDIDQSPIGRTPRSNPATYTGIFTPIRELFSGTQESRSRGYKPGRFSFNVRGGRCEACQGDGVIKVEMHFLPDVYVPCDVCKGKRYNRETLEVHYKGKSIDEVLEMTVEDAHEFFAPVPVIARKLQTLMDVGLSYIRLGQAATTLSGGEAQRVKLARELSKRDTGKTLYILDEPTTGLHFHDIQQLLTVLHRLRDHGNTVVVIEHNLDVIKTADWIIDLGPEGGQGGGEIIAQGTPEDVAQIEGSHTARFLKPMLK</sequence>
<feature type="chain" id="PRO_0000093113" description="UvrABC system protein A">
    <location>
        <begin position="1"/>
        <end position="940"/>
    </location>
</feature>
<feature type="domain" description="ABC transporter 1" evidence="1">
    <location>
        <begin position="309"/>
        <end position="586"/>
    </location>
</feature>
<feature type="domain" description="ABC transporter 2" evidence="1">
    <location>
        <begin position="606"/>
        <end position="936"/>
    </location>
</feature>
<feature type="zinc finger region" description="C4-type" evidence="1">
    <location>
        <begin position="252"/>
        <end position="279"/>
    </location>
</feature>
<feature type="zinc finger region" description="C4-type" evidence="1">
    <location>
        <begin position="739"/>
        <end position="765"/>
    </location>
</feature>
<feature type="binding site" evidence="1">
    <location>
        <begin position="31"/>
        <end position="38"/>
    </location>
    <ligand>
        <name>ATP</name>
        <dbReference type="ChEBI" id="CHEBI:30616"/>
    </ligand>
</feature>
<feature type="binding site" evidence="1">
    <location>
        <begin position="639"/>
        <end position="646"/>
    </location>
    <ligand>
        <name>ATP</name>
        <dbReference type="ChEBI" id="CHEBI:30616"/>
    </ligand>
</feature>
<organism>
    <name type="scientific">Vibrio vulnificus (strain CMCP6)</name>
    <dbReference type="NCBI Taxonomy" id="216895"/>
    <lineage>
        <taxon>Bacteria</taxon>
        <taxon>Pseudomonadati</taxon>
        <taxon>Pseudomonadota</taxon>
        <taxon>Gammaproteobacteria</taxon>
        <taxon>Vibrionales</taxon>
        <taxon>Vibrionaceae</taxon>
        <taxon>Vibrio</taxon>
    </lineage>
</organism>